<evidence type="ECO:0000255" key="1">
    <source>
        <dbReference type="HAMAP-Rule" id="MF_00022"/>
    </source>
</evidence>
<name>SYE_PROM2</name>
<feature type="chain" id="PRO_1000057198" description="Glutamate--tRNA ligase">
    <location>
        <begin position="1"/>
        <end position="479"/>
    </location>
</feature>
<feature type="short sequence motif" description="'HIGH' region" evidence="1">
    <location>
        <begin position="9"/>
        <end position="19"/>
    </location>
</feature>
<feature type="short sequence motif" description="'KMSKS' region" evidence="1">
    <location>
        <begin position="248"/>
        <end position="252"/>
    </location>
</feature>
<feature type="binding site" evidence="1">
    <location>
        <position position="251"/>
    </location>
    <ligand>
        <name>ATP</name>
        <dbReference type="ChEBI" id="CHEBI:30616"/>
    </ligand>
</feature>
<accession>A8G3I8</accession>
<keyword id="KW-0030">Aminoacyl-tRNA synthetase</keyword>
<keyword id="KW-0067">ATP-binding</keyword>
<keyword id="KW-0963">Cytoplasm</keyword>
<keyword id="KW-0436">Ligase</keyword>
<keyword id="KW-0547">Nucleotide-binding</keyword>
<keyword id="KW-0648">Protein biosynthesis</keyword>
<protein>
    <recommendedName>
        <fullName evidence="1">Glutamate--tRNA ligase</fullName>
        <ecNumber evidence="1">6.1.1.17</ecNumber>
    </recommendedName>
    <alternativeName>
        <fullName evidence="1">Glutamyl-tRNA synthetase</fullName>
        <shortName evidence="1">GluRS</shortName>
    </alternativeName>
</protein>
<comment type="function">
    <text evidence="1">Catalyzes the attachment of glutamate to tRNA(Glu) in a two-step reaction: glutamate is first activated by ATP to form Glu-AMP and then transferred to the acceptor end of tRNA(Glu).</text>
</comment>
<comment type="catalytic activity">
    <reaction evidence="1">
        <text>tRNA(Glu) + L-glutamate + ATP = L-glutamyl-tRNA(Glu) + AMP + diphosphate</text>
        <dbReference type="Rhea" id="RHEA:23540"/>
        <dbReference type="Rhea" id="RHEA-COMP:9663"/>
        <dbReference type="Rhea" id="RHEA-COMP:9680"/>
        <dbReference type="ChEBI" id="CHEBI:29985"/>
        <dbReference type="ChEBI" id="CHEBI:30616"/>
        <dbReference type="ChEBI" id="CHEBI:33019"/>
        <dbReference type="ChEBI" id="CHEBI:78442"/>
        <dbReference type="ChEBI" id="CHEBI:78520"/>
        <dbReference type="ChEBI" id="CHEBI:456215"/>
        <dbReference type="EC" id="6.1.1.17"/>
    </reaction>
</comment>
<comment type="subunit">
    <text evidence="1">Monomer.</text>
</comment>
<comment type="subcellular location">
    <subcellularLocation>
        <location evidence="1">Cytoplasm</location>
    </subcellularLocation>
</comment>
<comment type="similarity">
    <text evidence="1">Belongs to the class-I aminoacyl-tRNA synthetase family. Glutamate--tRNA ligase type 1 subfamily.</text>
</comment>
<dbReference type="EC" id="6.1.1.17" evidence="1"/>
<dbReference type="EMBL" id="CP000825">
    <property type="protein sequence ID" value="ABV50169.1"/>
    <property type="molecule type" value="Genomic_DNA"/>
</dbReference>
<dbReference type="RefSeq" id="WP_012007298.1">
    <property type="nucleotide sequence ID" value="NC_009840.1"/>
</dbReference>
<dbReference type="SMR" id="A8G3I8"/>
<dbReference type="STRING" id="93060.P9215_05531"/>
<dbReference type="KEGG" id="pmh:P9215_05531"/>
<dbReference type="eggNOG" id="COG0008">
    <property type="taxonomic scope" value="Bacteria"/>
</dbReference>
<dbReference type="HOGENOM" id="CLU_015768_6_0_3"/>
<dbReference type="OrthoDB" id="9807503at2"/>
<dbReference type="Proteomes" id="UP000002014">
    <property type="component" value="Chromosome"/>
</dbReference>
<dbReference type="GO" id="GO:0005829">
    <property type="term" value="C:cytosol"/>
    <property type="evidence" value="ECO:0007669"/>
    <property type="project" value="TreeGrafter"/>
</dbReference>
<dbReference type="GO" id="GO:0005524">
    <property type="term" value="F:ATP binding"/>
    <property type="evidence" value="ECO:0007669"/>
    <property type="project" value="UniProtKB-UniRule"/>
</dbReference>
<dbReference type="GO" id="GO:0004818">
    <property type="term" value="F:glutamate-tRNA ligase activity"/>
    <property type="evidence" value="ECO:0007669"/>
    <property type="project" value="UniProtKB-UniRule"/>
</dbReference>
<dbReference type="GO" id="GO:0000049">
    <property type="term" value="F:tRNA binding"/>
    <property type="evidence" value="ECO:0007669"/>
    <property type="project" value="InterPro"/>
</dbReference>
<dbReference type="GO" id="GO:0008270">
    <property type="term" value="F:zinc ion binding"/>
    <property type="evidence" value="ECO:0007669"/>
    <property type="project" value="InterPro"/>
</dbReference>
<dbReference type="GO" id="GO:0006424">
    <property type="term" value="P:glutamyl-tRNA aminoacylation"/>
    <property type="evidence" value="ECO:0007669"/>
    <property type="project" value="UniProtKB-UniRule"/>
</dbReference>
<dbReference type="CDD" id="cd00808">
    <property type="entry name" value="GluRS_core"/>
    <property type="match status" value="1"/>
</dbReference>
<dbReference type="FunFam" id="3.40.50.620:FF:000007">
    <property type="entry name" value="Glutamate--tRNA ligase"/>
    <property type="match status" value="1"/>
</dbReference>
<dbReference type="Gene3D" id="1.10.10.350">
    <property type="match status" value="1"/>
</dbReference>
<dbReference type="Gene3D" id="1.10.8.70">
    <property type="entry name" value="Glutamate-tRNA synthetase, class I, anticodon-binding domain 1"/>
    <property type="match status" value="1"/>
</dbReference>
<dbReference type="Gene3D" id="1.10.1160.10">
    <property type="entry name" value="Glutamyl-trna Synthetase, Domain 2"/>
    <property type="match status" value="1"/>
</dbReference>
<dbReference type="Gene3D" id="3.90.800.10">
    <property type="entry name" value="Glutamyl-tRNA Synthetase, Domain 3"/>
    <property type="match status" value="1"/>
</dbReference>
<dbReference type="Gene3D" id="3.40.50.620">
    <property type="entry name" value="HUPs"/>
    <property type="match status" value="1"/>
</dbReference>
<dbReference type="HAMAP" id="MF_00022">
    <property type="entry name" value="Glu_tRNA_synth_type1"/>
    <property type="match status" value="1"/>
</dbReference>
<dbReference type="InterPro" id="IPR045462">
    <property type="entry name" value="aa-tRNA-synth_I_cd-bd"/>
</dbReference>
<dbReference type="InterPro" id="IPR020751">
    <property type="entry name" value="aa-tRNA-synth_I_codon-bd_sub2"/>
</dbReference>
<dbReference type="InterPro" id="IPR001412">
    <property type="entry name" value="aa-tRNA-synth_I_CS"/>
</dbReference>
<dbReference type="InterPro" id="IPR008925">
    <property type="entry name" value="aa_tRNA-synth_I_cd-bd_sf"/>
</dbReference>
<dbReference type="InterPro" id="IPR004527">
    <property type="entry name" value="Glu-tRNA-ligase_bac/mito"/>
</dbReference>
<dbReference type="InterPro" id="IPR020752">
    <property type="entry name" value="Glu-tRNA-synth_I_codon-bd_sub1"/>
</dbReference>
<dbReference type="InterPro" id="IPR000924">
    <property type="entry name" value="Glu/Gln-tRNA-synth"/>
</dbReference>
<dbReference type="InterPro" id="IPR020058">
    <property type="entry name" value="Glu/Gln-tRNA-synth_Ib_cat-dom"/>
</dbReference>
<dbReference type="InterPro" id="IPR020061">
    <property type="entry name" value="Glu_tRNA_lig_a-bdl"/>
</dbReference>
<dbReference type="InterPro" id="IPR049940">
    <property type="entry name" value="GluQ/Sye"/>
</dbReference>
<dbReference type="InterPro" id="IPR033910">
    <property type="entry name" value="GluRS_core"/>
</dbReference>
<dbReference type="InterPro" id="IPR014729">
    <property type="entry name" value="Rossmann-like_a/b/a_fold"/>
</dbReference>
<dbReference type="NCBIfam" id="TIGR00464">
    <property type="entry name" value="gltX_bact"/>
    <property type="match status" value="1"/>
</dbReference>
<dbReference type="PANTHER" id="PTHR43311">
    <property type="entry name" value="GLUTAMATE--TRNA LIGASE"/>
    <property type="match status" value="1"/>
</dbReference>
<dbReference type="PANTHER" id="PTHR43311:SF2">
    <property type="entry name" value="GLUTAMATE--TRNA LIGASE, MITOCHONDRIAL-RELATED"/>
    <property type="match status" value="1"/>
</dbReference>
<dbReference type="Pfam" id="PF19269">
    <property type="entry name" value="Anticodon_2"/>
    <property type="match status" value="1"/>
</dbReference>
<dbReference type="Pfam" id="PF00749">
    <property type="entry name" value="tRNA-synt_1c"/>
    <property type="match status" value="1"/>
</dbReference>
<dbReference type="PRINTS" id="PR00987">
    <property type="entry name" value="TRNASYNTHGLU"/>
</dbReference>
<dbReference type="SUPFAM" id="SSF48163">
    <property type="entry name" value="An anticodon-binding domain of class I aminoacyl-tRNA synthetases"/>
    <property type="match status" value="1"/>
</dbReference>
<dbReference type="SUPFAM" id="SSF52374">
    <property type="entry name" value="Nucleotidylyl transferase"/>
    <property type="match status" value="1"/>
</dbReference>
<dbReference type="PROSITE" id="PS00178">
    <property type="entry name" value="AA_TRNA_LIGASE_I"/>
    <property type="match status" value="1"/>
</dbReference>
<sequence>MEKRLRLAPSPTGLFHIGTARTALFNWLYAQKIGGKFLLRIEDTDFVRSKSEYTKNILEGLKWLGLKWDDEILKQSDRISIHKSYIKKLLECGAAYRCFTTENEISELREEQKNKGLPPKHDNRHRSLSKEEIDSFISQGKTSVIRFKIDEKIEIKWVDLIRGEIKWQGKDLGGDLVLSRRAKGYEIGDPLYNLAVVVDDNFMNITHVVRGEDHISNTAKQILIYEALNFKLPTFSHTPLILNNEGKKLSKRDCVTSIDEFRDMGYLPEALSNYMAFLGWSPKSTDREILSLNEISEIFDLSDINKAGAKFSWEKLNWINSQYIKNMESIKLSEIIRKYWDDNGWVAPSQEWAHKLAILIRDSMILLKDAIDQSKPFFLIPKIKKEGQDFLENNDSKASLRLILNYLIEQNAIKLNKEKAKEIINEISKMHNVKKGILMKSLRVAFFGSLSGPDLIQSWELFSESKTDISRIERCFKSI</sequence>
<organism>
    <name type="scientific">Prochlorococcus marinus (strain MIT 9215)</name>
    <dbReference type="NCBI Taxonomy" id="93060"/>
    <lineage>
        <taxon>Bacteria</taxon>
        <taxon>Bacillati</taxon>
        <taxon>Cyanobacteriota</taxon>
        <taxon>Cyanophyceae</taxon>
        <taxon>Synechococcales</taxon>
        <taxon>Prochlorococcaceae</taxon>
        <taxon>Prochlorococcus</taxon>
    </lineage>
</organism>
<reference key="1">
    <citation type="journal article" date="2007" name="PLoS Genet.">
        <title>Patterns and implications of gene gain and loss in the evolution of Prochlorococcus.</title>
        <authorList>
            <person name="Kettler G.C."/>
            <person name="Martiny A.C."/>
            <person name="Huang K."/>
            <person name="Zucker J."/>
            <person name="Coleman M.L."/>
            <person name="Rodrigue S."/>
            <person name="Chen F."/>
            <person name="Lapidus A."/>
            <person name="Ferriera S."/>
            <person name="Johnson J."/>
            <person name="Steglich C."/>
            <person name="Church G.M."/>
            <person name="Richardson P."/>
            <person name="Chisholm S.W."/>
        </authorList>
    </citation>
    <scope>NUCLEOTIDE SEQUENCE [LARGE SCALE GENOMIC DNA]</scope>
    <source>
        <strain>MIT 9215</strain>
    </source>
</reference>
<gene>
    <name evidence="1" type="primary">gltX</name>
    <name type="ordered locus">P9215_05531</name>
</gene>
<proteinExistence type="inferred from homology"/>